<protein>
    <recommendedName>
        <fullName evidence="1">Small ribosomal subunit protein uS17</fullName>
    </recommendedName>
    <alternativeName>
        <fullName evidence="2">30S ribosomal protein S17</fullName>
    </alternativeName>
</protein>
<gene>
    <name evidence="1" type="primary">rpsQ</name>
    <name type="ordered locus">MGAS2096_Spy0057</name>
</gene>
<feature type="chain" id="PRO_0000255704" description="Small ribosomal subunit protein uS17">
    <location>
        <begin position="1"/>
        <end position="86"/>
    </location>
</feature>
<sequence length="86" mass="10090">MERNQRKTLYGRVVSDKMDKTITVVVETKRNHPVYGKRINYSKKYKAHDENNVAKEGDIVRIMETRPLSATKRFRLVEVVEKAVII</sequence>
<evidence type="ECO:0000255" key="1">
    <source>
        <dbReference type="HAMAP-Rule" id="MF_01345"/>
    </source>
</evidence>
<evidence type="ECO:0000305" key="2"/>
<dbReference type="EMBL" id="CP000261">
    <property type="protein sequence ID" value="ABF35109.1"/>
    <property type="molecule type" value="Genomic_DNA"/>
</dbReference>
<dbReference type="SMR" id="Q1JE49"/>
<dbReference type="KEGG" id="spj:MGAS2096_Spy0057"/>
<dbReference type="HOGENOM" id="CLU_073626_1_0_9"/>
<dbReference type="GO" id="GO:0022627">
    <property type="term" value="C:cytosolic small ribosomal subunit"/>
    <property type="evidence" value="ECO:0007669"/>
    <property type="project" value="TreeGrafter"/>
</dbReference>
<dbReference type="GO" id="GO:0019843">
    <property type="term" value="F:rRNA binding"/>
    <property type="evidence" value="ECO:0007669"/>
    <property type="project" value="UniProtKB-UniRule"/>
</dbReference>
<dbReference type="GO" id="GO:0003735">
    <property type="term" value="F:structural constituent of ribosome"/>
    <property type="evidence" value="ECO:0007669"/>
    <property type="project" value="InterPro"/>
</dbReference>
<dbReference type="GO" id="GO:0006412">
    <property type="term" value="P:translation"/>
    <property type="evidence" value="ECO:0007669"/>
    <property type="project" value="UniProtKB-UniRule"/>
</dbReference>
<dbReference type="CDD" id="cd00364">
    <property type="entry name" value="Ribosomal_uS17"/>
    <property type="match status" value="1"/>
</dbReference>
<dbReference type="FunFam" id="2.40.50.140:FF:000026">
    <property type="entry name" value="30S ribosomal protein S17"/>
    <property type="match status" value="1"/>
</dbReference>
<dbReference type="Gene3D" id="2.40.50.140">
    <property type="entry name" value="Nucleic acid-binding proteins"/>
    <property type="match status" value="1"/>
</dbReference>
<dbReference type="HAMAP" id="MF_01345_B">
    <property type="entry name" value="Ribosomal_uS17_B"/>
    <property type="match status" value="1"/>
</dbReference>
<dbReference type="InterPro" id="IPR012340">
    <property type="entry name" value="NA-bd_OB-fold"/>
</dbReference>
<dbReference type="InterPro" id="IPR000266">
    <property type="entry name" value="Ribosomal_uS17"/>
</dbReference>
<dbReference type="InterPro" id="IPR019984">
    <property type="entry name" value="Ribosomal_uS17_bact/chlr"/>
</dbReference>
<dbReference type="InterPro" id="IPR019979">
    <property type="entry name" value="Ribosomal_uS17_CS"/>
</dbReference>
<dbReference type="NCBIfam" id="NF004123">
    <property type="entry name" value="PRK05610.1"/>
    <property type="match status" value="1"/>
</dbReference>
<dbReference type="NCBIfam" id="TIGR03635">
    <property type="entry name" value="uS17_bact"/>
    <property type="match status" value="1"/>
</dbReference>
<dbReference type="PANTHER" id="PTHR10744">
    <property type="entry name" value="40S RIBOSOMAL PROTEIN S11 FAMILY MEMBER"/>
    <property type="match status" value="1"/>
</dbReference>
<dbReference type="PANTHER" id="PTHR10744:SF1">
    <property type="entry name" value="SMALL RIBOSOMAL SUBUNIT PROTEIN US17M"/>
    <property type="match status" value="1"/>
</dbReference>
<dbReference type="Pfam" id="PF00366">
    <property type="entry name" value="Ribosomal_S17"/>
    <property type="match status" value="1"/>
</dbReference>
<dbReference type="PRINTS" id="PR00973">
    <property type="entry name" value="RIBOSOMALS17"/>
</dbReference>
<dbReference type="SUPFAM" id="SSF50249">
    <property type="entry name" value="Nucleic acid-binding proteins"/>
    <property type="match status" value="1"/>
</dbReference>
<dbReference type="PROSITE" id="PS00056">
    <property type="entry name" value="RIBOSOMAL_S17"/>
    <property type="match status" value="1"/>
</dbReference>
<comment type="function">
    <text evidence="1">One of the primary rRNA binding proteins, it binds specifically to the 5'-end of 16S ribosomal RNA.</text>
</comment>
<comment type="subunit">
    <text evidence="1">Part of the 30S ribosomal subunit.</text>
</comment>
<comment type="similarity">
    <text evidence="1">Belongs to the universal ribosomal protein uS17 family.</text>
</comment>
<keyword id="KW-0687">Ribonucleoprotein</keyword>
<keyword id="KW-0689">Ribosomal protein</keyword>
<keyword id="KW-0694">RNA-binding</keyword>
<keyword id="KW-0699">rRNA-binding</keyword>
<reference key="1">
    <citation type="journal article" date="2006" name="Proc. Natl. Acad. Sci. U.S.A.">
        <title>Molecular genetic anatomy of inter- and intraserotype variation in the human bacterial pathogen group A Streptococcus.</title>
        <authorList>
            <person name="Beres S.B."/>
            <person name="Richter E.W."/>
            <person name="Nagiec M.J."/>
            <person name="Sumby P."/>
            <person name="Porcella S.F."/>
            <person name="DeLeo F.R."/>
            <person name="Musser J.M."/>
        </authorList>
    </citation>
    <scope>NUCLEOTIDE SEQUENCE [LARGE SCALE GENOMIC DNA]</scope>
    <source>
        <strain>MGAS2096</strain>
    </source>
</reference>
<organism>
    <name type="scientific">Streptococcus pyogenes serotype M12 (strain MGAS2096)</name>
    <dbReference type="NCBI Taxonomy" id="370553"/>
    <lineage>
        <taxon>Bacteria</taxon>
        <taxon>Bacillati</taxon>
        <taxon>Bacillota</taxon>
        <taxon>Bacilli</taxon>
        <taxon>Lactobacillales</taxon>
        <taxon>Streptococcaceae</taxon>
        <taxon>Streptococcus</taxon>
    </lineage>
</organism>
<name>RS17_STRPB</name>
<accession>Q1JE49</accession>
<proteinExistence type="inferred from homology"/>